<feature type="chain" id="PRO_0000197640" description="Rhodopsin">
    <location>
        <begin position="1"/>
        <end position="378"/>
    </location>
</feature>
<feature type="topological domain" description="Extracellular" evidence="2">
    <location>
        <begin position="1"/>
        <end position="53"/>
    </location>
</feature>
<feature type="transmembrane region" description="Helical; Name=1" evidence="2">
    <location>
        <begin position="54"/>
        <end position="78"/>
    </location>
</feature>
<feature type="topological domain" description="Cytoplasmic" evidence="2">
    <location>
        <begin position="79"/>
        <end position="90"/>
    </location>
</feature>
<feature type="transmembrane region" description="Helical; Name=2" evidence="2">
    <location>
        <begin position="91"/>
        <end position="115"/>
    </location>
</feature>
<feature type="topological domain" description="Extracellular" evidence="2">
    <location>
        <begin position="116"/>
        <end position="130"/>
    </location>
</feature>
<feature type="transmembrane region" description="Helical; Name=3" evidence="2">
    <location>
        <begin position="131"/>
        <end position="150"/>
    </location>
</feature>
<feature type="topological domain" description="Cytoplasmic" evidence="2">
    <location>
        <begin position="151"/>
        <end position="169"/>
    </location>
</feature>
<feature type="transmembrane region" description="Helical; Name=4" evidence="2">
    <location>
        <begin position="170"/>
        <end position="193"/>
    </location>
</feature>
<feature type="topological domain" description="Extracellular" evidence="2">
    <location>
        <begin position="194"/>
        <end position="217"/>
    </location>
</feature>
<feature type="transmembrane region" description="Helical; Name=5" evidence="2">
    <location>
        <begin position="218"/>
        <end position="245"/>
    </location>
</feature>
<feature type="topological domain" description="Cytoplasmic" evidence="2">
    <location>
        <begin position="246"/>
        <end position="280"/>
    </location>
</feature>
<feature type="transmembrane region" description="Helical; Name=6" evidence="2">
    <location>
        <begin position="281"/>
        <end position="304"/>
    </location>
</feature>
<feature type="topological domain" description="Extracellular" evidence="2">
    <location>
        <begin position="305"/>
        <end position="311"/>
    </location>
</feature>
<feature type="transmembrane region" description="Helical; Name=7" evidence="2">
    <location>
        <begin position="312"/>
        <end position="336"/>
    </location>
</feature>
<feature type="topological domain" description="Cytoplasmic" evidence="2">
    <location>
        <begin position="337"/>
        <end position="378"/>
    </location>
</feature>
<feature type="modified residue" description="N6-(retinylidene)lysine" evidence="1">
    <location>
        <position position="323"/>
    </location>
</feature>
<feature type="glycosylation site" description="N-linked (GlcNAc...) asparagine" evidence="2">
    <location>
        <position position="24"/>
    </location>
</feature>
<feature type="glycosylation site" description="N-linked (GlcNAc...) asparagine" evidence="2">
    <location>
        <position position="200"/>
    </location>
</feature>
<feature type="disulfide bond" evidence="3">
    <location>
        <begin position="127"/>
        <end position="204"/>
    </location>
</feature>
<comment type="function">
    <text>Visual pigments are the light-absorbing molecules that mediate vision. They consist of an apoprotein, opsin, covalently linked to cis-retinal.</text>
</comment>
<comment type="subcellular location">
    <subcellularLocation>
        <location>Membrane</location>
        <topology>Multi-pass membrane protein</topology>
    </subcellularLocation>
</comment>
<comment type="PTM">
    <text evidence="1">Phosphorylated on some or all of the serine and threonine residues present in the C-terminal region.</text>
</comment>
<comment type="similarity">
    <text evidence="3">Belongs to the G-protein coupled receptor 1 family. Opsin subfamily.</text>
</comment>
<sequence>MMSIASGPSHAAYTWASQGGGFGNQTVVDKVPPEMLHMVDAHWYQFPPMNPLWHALLGFVIGVLGVISVIGNGMVIYIFTTTKSLRTPSNLLVVNLAISDFLMMLCMSPAMVINCYYETWVLGPLFCELYGLAGSLFGCASIWTMTMIAFDRYNVIVKGLSAKPMTINGALIRILTIWFFTLAWTIAPMFGWNRYVPEGNMTACGTDYLTKDLFSRSYILIYSIFVYFTPLFLIIYSYFFIIQAVAAHEKNMREQAKKMNVASLRSAENQSTSAECKLAKVALMTISLWFMAWTPYLVINYSGIFETTKISPLFTIWGSLFAKANAVYNPIVYGISHPKYRAALFQKFPSLACTTEPTGADTMSTTTTVTEGNEKPAA</sequence>
<accession>Q17292</accession>
<dbReference type="EMBL" id="U32502">
    <property type="protein sequence ID" value="AAC47083.1"/>
    <property type="molecule type" value="mRNA"/>
</dbReference>
<dbReference type="SMR" id="Q17292"/>
<dbReference type="GO" id="GO:0005886">
    <property type="term" value="C:plasma membrane"/>
    <property type="evidence" value="ECO:0000250"/>
    <property type="project" value="UniProtKB"/>
</dbReference>
<dbReference type="GO" id="GO:0004930">
    <property type="term" value="F:G protein-coupled receptor activity"/>
    <property type="evidence" value="ECO:0007669"/>
    <property type="project" value="UniProtKB-KW"/>
</dbReference>
<dbReference type="GO" id="GO:0009881">
    <property type="term" value="F:photoreceptor activity"/>
    <property type="evidence" value="ECO:0007669"/>
    <property type="project" value="UniProtKB-KW"/>
</dbReference>
<dbReference type="GO" id="GO:0007602">
    <property type="term" value="P:phototransduction"/>
    <property type="evidence" value="ECO:0007669"/>
    <property type="project" value="UniProtKB-KW"/>
</dbReference>
<dbReference type="GO" id="GO:0007601">
    <property type="term" value="P:visual perception"/>
    <property type="evidence" value="ECO:0007669"/>
    <property type="project" value="UniProtKB-KW"/>
</dbReference>
<dbReference type="CDD" id="cd15079">
    <property type="entry name" value="7tmA_photoreceptors_insect"/>
    <property type="match status" value="1"/>
</dbReference>
<dbReference type="FunFam" id="1.20.1070.10:FF:000044">
    <property type="entry name" value="Opsin, ultraviolet-sensitive"/>
    <property type="match status" value="1"/>
</dbReference>
<dbReference type="Gene3D" id="1.20.1070.10">
    <property type="entry name" value="Rhodopsin 7-helix transmembrane proteins"/>
    <property type="match status" value="1"/>
</dbReference>
<dbReference type="InterPro" id="IPR050125">
    <property type="entry name" value="GPCR_opsins"/>
</dbReference>
<dbReference type="InterPro" id="IPR000276">
    <property type="entry name" value="GPCR_Rhodpsn"/>
</dbReference>
<dbReference type="InterPro" id="IPR017452">
    <property type="entry name" value="GPCR_Rhodpsn_7TM"/>
</dbReference>
<dbReference type="InterPro" id="IPR001760">
    <property type="entry name" value="Opsin"/>
</dbReference>
<dbReference type="InterPro" id="IPR001391">
    <property type="entry name" value="Opsin_lateye"/>
</dbReference>
<dbReference type="InterPro" id="IPR027430">
    <property type="entry name" value="Retinal_BS"/>
</dbReference>
<dbReference type="PANTHER" id="PTHR24240">
    <property type="entry name" value="OPSIN"/>
    <property type="match status" value="1"/>
</dbReference>
<dbReference type="Pfam" id="PF00001">
    <property type="entry name" value="7tm_1"/>
    <property type="match status" value="1"/>
</dbReference>
<dbReference type="PRINTS" id="PR00237">
    <property type="entry name" value="GPCRRHODOPSN"/>
</dbReference>
<dbReference type="PRINTS" id="PR00238">
    <property type="entry name" value="OPSIN"/>
</dbReference>
<dbReference type="PRINTS" id="PR00578">
    <property type="entry name" value="OPSINLTRLEYE"/>
</dbReference>
<dbReference type="SUPFAM" id="SSF81321">
    <property type="entry name" value="Family A G protein-coupled receptor-like"/>
    <property type="match status" value="1"/>
</dbReference>
<dbReference type="PROSITE" id="PS00237">
    <property type="entry name" value="G_PROTEIN_RECEP_F1_1"/>
    <property type="match status" value="1"/>
</dbReference>
<dbReference type="PROSITE" id="PS50262">
    <property type="entry name" value="G_PROTEIN_RECEP_F1_2"/>
    <property type="match status" value="1"/>
</dbReference>
<dbReference type="PROSITE" id="PS00238">
    <property type="entry name" value="OPSIN"/>
    <property type="match status" value="1"/>
</dbReference>
<keyword id="KW-0157">Chromophore</keyword>
<keyword id="KW-1015">Disulfide bond</keyword>
<keyword id="KW-0297">G-protein coupled receptor</keyword>
<keyword id="KW-0325">Glycoprotein</keyword>
<keyword id="KW-0472">Membrane</keyword>
<keyword id="KW-0597">Phosphoprotein</keyword>
<keyword id="KW-0600">Photoreceptor protein</keyword>
<keyword id="KW-0675">Receptor</keyword>
<keyword id="KW-0681">Retinal protein</keyword>
<keyword id="KW-0716">Sensory transduction</keyword>
<keyword id="KW-0807">Transducer</keyword>
<keyword id="KW-0812">Transmembrane</keyword>
<keyword id="KW-1133">Transmembrane helix</keyword>
<keyword id="KW-0844">Vision</keyword>
<evidence type="ECO:0000250" key="1"/>
<evidence type="ECO:0000255" key="2"/>
<evidence type="ECO:0000255" key="3">
    <source>
        <dbReference type="PROSITE-ProRule" id="PRU00521"/>
    </source>
</evidence>
<protein>
    <recommendedName>
        <fullName>Rhodopsin</fullName>
    </recommendedName>
</protein>
<proteinExistence type="evidence at transcript level"/>
<organism>
    <name type="scientific">Camponotus atriceps</name>
    <name type="common">Florida carpenter ant</name>
    <name type="synonym">Camponotus abdominalis</name>
    <dbReference type="NCBI Taxonomy" id="104420"/>
    <lineage>
        <taxon>Eukaryota</taxon>
        <taxon>Metazoa</taxon>
        <taxon>Ecdysozoa</taxon>
        <taxon>Arthropoda</taxon>
        <taxon>Hexapoda</taxon>
        <taxon>Insecta</taxon>
        <taxon>Pterygota</taxon>
        <taxon>Neoptera</taxon>
        <taxon>Endopterygota</taxon>
        <taxon>Hymenoptera</taxon>
        <taxon>Apocrita</taxon>
        <taxon>Aculeata</taxon>
        <taxon>Formicoidea</taxon>
        <taxon>Formicidae</taxon>
        <taxon>Formicinae</taxon>
        <taxon>Camponotus</taxon>
    </lineage>
</organism>
<name>OPSD_CAMAT</name>
<reference key="1">
    <citation type="journal article" date="1996" name="Invertebr. Neurosci.">
        <title>Ant opsins: sequences from the Saharan silver ant and the carpenter ant.</title>
        <authorList>
            <person name="Popp M.P."/>
            <person name="Grisshammer R."/>
            <person name="Hargrave P.A."/>
            <person name="Smith W.C."/>
        </authorList>
    </citation>
    <scope>NUCLEOTIDE SEQUENCE [MRNA]</scope>
    <source>
        <tissue>Retina</tissue>
    </source>
</reference>